<protein>
    <recommendedName>
        <fullName evidence="1">Translation initiation factor IF-1</fullName>
    </recommendedName>
</protein>
<proteinExistence type="inferred from homology"/>
<feature type="chain" id="PRO_0000338775" description="Translation initiation factor IF-1">
    <location>
        <begin position="1"/>
        <end position="71"/>
    </location>
</feature>
<feature type="domain" description="S1-like" evidence="1">
    <location>
        <begin position="1"/>
        <end position="71"/>
    </location>
</feature>
<keyword id="KW-0963">Cytoplasm</keyword>
<keyword id="KW-0396">Initiation factor</keyword>
<keyword id="KW-0648">Protein biosynthesis</keyword>
<keyword id="KW-1185">Reference proteome</keyword>
<keyword id="KW-0694">RNA-binding</keyword>
<keyword id="KW-0699">rRNA-binding</keyword>
<organism>
    <name type="scientific">Buchnera aphidicola subsp. Cinara cedri (strain Cc)</name>
    <dbReference type="NCBI Taxonomy" id="372461"/>
    <lineage>
        <taxon>Bacteria</taxon>
        <taxon>Pseudomonadati</taxon>
        <taxon>Pseudomonadota</taxon>
        <taxon>Gammaproteobacteria</taxon>
        <taxon>Enterobacterales</taxon>
        <taxon>Erwiniaceae</taxon>
        <taxon>Buchnera</taxon>
    </lineage>
</organism>
<reference key="1">
    <citation type="journal article" date="2006" name="Science">
        <title>A small microbial genome: the end of a long symbiotic relationship?</title>
        <authorList>
            <person name="Perez-Brocal V."/>
            <person name="Gil R."/>
            <person name="Ramos S."/>
            <person name="Lamelas A."/>
            <person name="Postigo M."/>
            <person name="Michelena J.M."/>
            <person name="Silva F.J."/>
            <person name="Moya A."/>
            <person name="Latorre A."/>
        </authorList>
    </citation>
    <scope>NUCLEOTIDE SEQUENCE [LARGE SCALE GENOMIC DNA]</scope>
    <source>
        <strain>Cc</strain>
    </source>
</reference>
<sequence>MKEKNIEMQGTVIDTLPNTTFKVELENKHIVIAHISGKMRKNYIRILTGDKVTLELTPYDLSKGRIIFRSR</sequence>
<evidence type="ECO:0000255" key="1">
    <source>
        <dbReference type="HAMAP-Rule" id="MF_00075"/>
    </source>
</evidence>
<name>IF1_BUCCC</name>
<accession>Q057N2</accession>
<comment type="function">
    <text evidence="1">One of the essential components for the initiation of protein synthesis. Stabilizes the binding of IF-2 and IF-3 on the 30S subunit to which N-formylmethionyl-tRNA(fMet) subsequently binds. Helps modulate mRNA selection, yielding the 30S pre-initiation complex (PIC). Upon addition of the 50S ribosomal subunit IF-1, IF-2 and IF-3 are released leaving the mature 70S translation initiation complex.</text>
</comment>
<comment type="subunit">
    <text evidence="1">Component of the 30S ribosomal translation pre-initiation complex which assembles on the 30S ribosome in the order IF-2 and IF-3, IF-1 and N-formylmethionyl-tRNA(fMet); mRNA recruitment can occur at any time during PIC assembly.</text>
</comment>
<comment type="subcellular location">
    <subcellularLocation>
        <location evidence="1">Cytoplasm</location>
    </subcellularLocation>
</comment>
<comment type="similarity">
    <text evidence="1">Belongs to the IF-1 family.</text>
</comment>
<gene>
    <name evidence="1" type="primary">infA</name>
    <name type="ordered locus">BCc_195</name>
</gene>
<dbReference type="EMBL" id="CP000263">
    <property type="protein sequence ID" value="ABJ90667.1"/>
    <property type="molecule type" value="Genomic_DNA"/>
</dbReference>
<dbReference type="RefSeq" id="WP_011672586.1">
    <property type="nucleotide sequence ID" value="NC_008513.1"/>
</dbReference>
<dbReference type="SMR" id="Q057N2"/>
<dbReference type="STRING" id="372461.BCc_195"/>
<dbReference type="KEGG" id="bcc:BCc_195"/>
<dbReference type="eggNOG" id="COG0361">
    <property type="taxonomic scope" value="Bacteria"/>
</dbReference>
<dbReference type="HOGENOM" id="CLU_151267_1_0_6"/>
<dbReference type="OrthoDB" id="9803250at2"/>
<dbReference type="Proteomes" id="UP000000669">
    <property type="component" value="Chromosome"/>
</dbReference>
<dbReference type="GO" id="GO:0005829">
    <property type="term" value="C:cytosol"/>
    <property type="evidence" value="ECO:0007669"/>
    <property type="project" value="TreeGrafter"/>
</dbReference>
<dbReference type="GO" id="GO:0043022">
    <property type="term" value="F:ribosome binding"/>
    <property type="evidence" value="ECO:0007669"/>
    <property type="project" value="UniProtKB-UniRule"/>
</dbReference>
<dbReference type="GO" id="GO:0019843">
    <property type="term" value="F:rRNA binding"/>
    <property type="evidence" value="ECO:0007669"/>
    <property type="project" value="UniProtKB-UniRule"/>
</dbReference>
<dbReference type="GO" id="GO:0003743">
    <property type="term" value="F:translation initiation factor activity"/>
    <property type="evidence" value="ECO:0007669"/>
    <property type="project" value="UniProtKB-UniRule"/>
</dbReference>
<dbReference type="CDD" id="cd04451">
    <property type="entry name" value="S1_IF1"/>
    <property type="match status" value="1"/>
</dbReference>
<dbReference type="FunFam" id="2.40.50.140:FF:000002">
    <property type="entry name" value="Translation initiation factor IF-1"/>
    <property type="match status" value="1"/>
</dbReference>
<dbReference type="Gene3D" id="2.40.50.140">
    <property type="entry name" value="Nucleic acid-binding proteins"/>
    <property type="match status" value="1"/>
</dbReference>
<dbReference type="HAMAP" id="MF_00075">
    <property type="entry name" value="IF_1"/>
    <property type="match status" value="1"/>
</dbReference>
<dbReference type="InterPro" id="IPR012340">
    <property type="entry name" value="NA-bd_OB-fold"/>
</dbReference>
<dbReference type="InterPro" id="IPR006196">
    <property type="entry name" value="RNA-binding_domain_S1_IF1"/>
</dbReference>
<dbReference type="InterPro" id="IPR003029">
    <property type="entry name" value="S1_domain"/>
</dbReference>
<dbReference type="InterPro" id="IPR004368">
    <property type="entry name" value="TIF_IF1"/>
</dbReference>
<dbReference type="NCBIfam" id="TIGR00008">
    <property type="entry name" value="infA"/>
    <property type="match status" value="1"/>
</dbReference>
<dbReference type="PANTHER" id="PTHR33370">
    <property type="entry name" value="TRANSLATION INITIATION FACTOR IF-1, CHLOROPLASTIC"/>
    <property type="match status" value="1"/>
</dbReference>
<dbReference type="PANTHER" id="PTHR33370:SF1">
    <property type="entry name" value="TRANSLATION INITIATION FACTOR IF-1, CHLOROPLASTIC"/>
    <property type="match status" value="1"/>
</dbReference>
<dbReference type="Pfam" id="PF01176">
    <property type="entry name" value="eIF-1a"/>
    <property type="match status" value="1"/>
</dbReference>
<dbReference type="SMART" id="SM00316">
    <property type="entry name" value="S1"/>
    <property type="match status" value="1"/>
</dbReference>
<dbReference type="SUPFAM" id="SSF50249">
    <property type="entry name" value="Nucleic acid-binding proteins"/>
    <property type="match status" value="1"/>
</dbReference>
<dbReference type="PROSITE" id="PS50832">
    <property type="entry name" value="S1_IF1_TYPE"/>
    <property type="match status" value="1"/>
</dbReference>